<dbReference type="EC" id="2.1.2.1" evidence="1"/>
<dbReference type="EMBL" id="AE008384">
    <property type="protein sequence ID" value="AAM30138.1"/>
    <property type="status" value="ALT_INIT"/>
    <property type="molecule type" value="Genomic_DNA"/>
</dbReference>
<dbReference type="RefSeq" id="WP_048045848.1">
    <property type="nucleotide sequence ID" value="NC_003901.1"/>
</dbReference>
<dbReference type="SMR" id="Q8PZQ0"/>
<dbReference type="GeneID" id="24838485"/>
<dbReference type="KEGG" id="mma:MM_0442"/>
<dbReference type="PATRIC" id="fig|192952.21.peg.532"/>
<dbReference type="eggNOG" id="arCOG00070">
    <property type="taxonomic scope" value="Archaea"/>
</dbReference>
<dbReference type="HOGENOM" id="CLU_022477_2_1_2"/>
<dbReference type="UniPathway" id="UPA00193"/>
<dbReference type="UniPathway" id="UPA00288">
    <property type="reaction ID" value="UER01023"/>
</dbReference>
<dbReference type="Proteomes" id="UP000000595">
    <property type="component" value="Chromosome"/>
</dbReference>
<dbReference type="GO" id="GO:0005737">
    <property type="term" value="C:cytoplasm"/>
    <property type="evidence" value="ECO:0007669"/>
    <property type="project" value="UniProtKB-SubCell"/>
</dbReference>
<dbReference type="GO" id="GO:0004372">
    <property type="term" value="F:glycine hydroxymethyltransferase activity"/>
    <property type="evidence" value="ECO:0007669"/>
    <property type="project" value="UniProtKB-UniRule"/>
</dbReference>
<dbReference type="GO" id="GO:0030170">
    <property type="term" value="F:pyridoxal phosphate binding"/>
    <property type="evidence" value="ECO:0007669"/>
    <property type="project" value="UniProtKB-UniRule"/>
</dbReference>
<dbReference type="GO" id="GO:0019264">
    <property type="term" value="P:glycine biosynthetic process from serine"/>
    <property type="evidence" value="ECO:0007669"/>
    <property type="project" value="UniProtKB-UniRule"/>
</dbReference>
<dbReference type="GO" id="GO:0035999">
    <property type="term" value="P:tetrahydrofolate interconversion"/>
    <property type="evidence" value="ECO:0007669"/>
    <property type="project" value="UniProtKB-UniRule"/>
</dbReference>
<dbReference type="CDD" id="cd00378">
    <property type="entry name" value="SHMT"/>
    <property type="match status" value="1"/>
</dbReference>
<dbReference type="FunFam" id="3.40.640.10:FF:000001">
    <property type="entry name" value="Serine hydroxymethyltransferase"/>
    <property type="match status" value="1"/>
</dbReference>
<dbReference type="FunFam" id="3.90.1150.10:FF:000003">
    <property type="entry name" value="Serine hydroxymethyltransferase"/>
    <property type="match status" value="1"/>
</dbReference>
<dbReference type="Gene3D" id="3.90.1150.10">
    <property type="entry name" value="Aspartate Aminotransferase, domain 1"/>
    <property type="match status" value="1"/>
</dbReference>
<dbReference type="Gene3D" id="3.40.640.10">
    <property type="entry name" value="Type I PLP-dependent aspartate aminotransferase-like (Major domain)"/>
    <property type="match status" value="1"/>
</dbReference>
<dbReference type="HAMAP" id="MF_00051">
    <property type="entry name" value="SHMT"/>
    <property type="match status" value="1"/>
</dbReference>
<dbReference type="InterPro" id="IPR015424">
    <property type="entry name" value="PyrdxlP-dep_Trfase"/>
</dbReference>
<dbReference type="InterPro" id="IPR015421">
    <property type="entry name" value="PyrdxlP-dep_Trfase_major"/>
</dbReference>
<dbReference type="InterPro" id="IPR015422">
    <property type="entry name" value="PyrdxlP-dep_Trfase_small"/>
</dbReference>
<dbReference type="InterPro" id="IPR001085">
    <property type="entry name" value="Ser_HO-MeTrfase"/>
</dbReference>
<dbReference type="InterPro" id="IPR049943">
    <property type="entry name" value="Ser_HO-MeTrfase-like"/>
</dbReference>
<dbReference type="InterPro" id="IPR019798">
    <property type="entry name" value="Ser_HO-MeTrfase_PLP_BS"/>
</dbReference>
<dbReference type="InterPro" id="IPR039429">
    <property type="entry name" value="SHMT-like_dom"/>
</dbReference>
<dbReference type="NCBIfam" id="NF000586">
    <property type="entry name" value="PRK00011.1"/>
    <property type="match status" value="1"/>
</dbReference>
<dbReference type="PANTHER" id="PTHR11680">
    <property type="entry name" value="SERINE HYDROXYMETHYLTRANSFERASE"/>
    <property type="match status" value="1"/>
</dbReference>
<dbReference type="PANTHER" id="PTHR11680:SF35">
    <property type="entry name" value="SERINE HYDROXYMETHYLTRANSFERASE 1"/>
    <property type="match status" value="1"/>
</dbReference>
<dbReference type="Pfam" id="PF00464">
    <property type="entry name" value="SHMT"/>
    <property type="match status" value="1"/>
</dbReference>
<dbReference type="PIRSF" id="PIRSF000412">
    <property type="entry name" value="SHMT"/>
    <property type="match status" value="1"/>
</dbReference>
<dbReference type="SUPFAM" id="SSF53383">
    <property type="entry name" value="PLP-dependent transferases"/>
    <property type="match status" value="1"/>
</dbReference>
<dbReference type="PROSITE" id="PS00096">
    <property type="entry name" value="SHMT"/>
    <property type="match status" value="1"/>
</dbReference>
<reference key="1">
    <citation type="journal article" date="2002" name="J. Mol. Microbiol. Biotechnol.">
        <title>The genome of Methanosarcina mazei: evidence for lateral gene transfer between Bacteria and Archaea.</title>
        <authorList>
            <person name="Deppenmeier U."/>
            <person name="Johann A."/>
            <person name="Hartsch T."/>
            <person name="Merkl R."/>
            <person name="Schmitz R.A."/>
            <person name="Martinez-Arias R."/>
            <person name="Henne A."/>
            <person name="Wiezer A."/>
            <person name="Baeumer S."/>
            <person name="Jacobi C."/>
            <person name="Brueggemann H."/>
            <person name="Lienard T."/>
            <person name="Christmann A."/>
            <person name="Boemecke M."/>
            <person name="Steckel S."/>
            <person name="Bhattacharyya A."/>
            <person name="Lykidis A."/>
            <person name="Overbeek R."/>
            <person name="Klenk H.-P."/>
            <person name="Gunsalus R.P."/>
            <person name="Fritz H.-J."/>
            <person name="Gottschalk G."/>
        </authorList>
    </citation>
    <scope>NUCLEOTIDE SEQUENCE [LARGE SCALE GENOMIC DNA]</scope>
    <source>
        <strain>ATCC BAA-159 / DSM 3647 / Goe1 / Go1 / JCM 11833 / OCM 88</strain>
    </source>
</reference>
<sequence length="412" mass="44873">MSYIEKIDPELFEAIKNEADRQEHKLNLIASENYASRAVMEAQGSIMTNKYAEGYSGKRYYGGCDFVDVAENLAIARAKELFGAKYVNVQPHSGSGANMAVYFSVLQPGDTILSMDLSHGGHLSHGSPVSFSGKLYNIVPYGVSKETEALDYDELLKLAKECKPRMIVCGASAYPRVIDFKRFREIADEVGAYLLADIAHIAGLVVAGVHPSPVPYADFVTTTTHKTLRGPRGGMIISKTEELAIGVNKAVFPGIQGGPLMHIIAAKAVAFKEAMSEEFRQDQDQTVKNAKVLCSCLKQKGFDIVSGGTDNHLMLVNLNNMNITGKDAEAALSKAGIIANKNTVPFETRSPFVTSGVRLGTPSCTTRGMKEKEMELVADYIEAAIKNSENDALLSEINIKVRDLCLKFPVYE</sequence>
<keyword id="KW-0028">Amino-acid biosynthesis</keyword>
<keyword id="KW-0963">Cytoplasm</keyword>
<keyword id="KW-0554">One-carbon metabolism</keyword>
<keyword id="KW-0663">Pyridoxal phosphate</keyword>
<keyword id="KW-0808">Transferase</keyword>
<feature type="chain" id="PRO_0000113715" description="Serine hydroxymethyltransferase">
    <location>
        <begin position="1"/>
        <end position="412"/>
    </location>
</feature>
<feature type="binding site" evidence="1">
    <location>
        <position position="117"/>
    </location>
    <ligand>
        <name>(6S)-5,6,7,8-tetrahydrofolate</name>
        <dbReference type="ChEBI" id="CHEBI:57453"/>
    </ligand>
</feature>
<feature type="binding site" evidence="1">
    <location>
        <begin position="121"/>
        <end position="123"/>
    </location>
    <ligand>
        <name>(6S)-5,6,7,8-tetrahydrofolate</name>
        <dbReference type="ChEBI" id="CHEBI:57453"/>
    </ligand>
</feature>
<feature type="binding site" evidence="1">
    <location>
        <position position="242"/>
    </location>
    <ligand>
        <name>(6S)-5,6,7,8-tetrahydrofolate</name>
        <dbReference type="ChEBI" id="CHEBI:57453"/>
    </ligand>
</feature>
<feature type="binding site" evidence="1">
    <location>
        <begin position="350"/>
        <end position="352"/>
    </location>
    <ligand>
        <name>(6S)-5,6,7,8-tetrahydrofolate</name>
        <dbReference type="ChEBI" id="CHEBI:57453"/>
    </ligand>
</feature>
<feature type="site" description="Plays an important role in substrate specificity" evidence="1">
    <location>
        <position position="225"/>
    </location>
</feature>
<feature type="modified residue" description="N6-(pyridoxal phosphate)lysine" evidence="1">
    <location>
        <position position="226"/>
    </location>
</feature>
<gene>
    <name evidence="1" type="primary">glyA</name>
    <name type="ordered locus">MM_0442</name>
</gene>
<organism>
    <name type="scientific">Methanosarcina mazei (strain ATCC BAA-159 / DSM 3647 / Goe1 / Go1 / JCM 11833 / OCM 88)</name>
    <name type="common">Methanosarcina frisia</name>
    <dbReference type="NCBI Taxonomy" id="192952"/>
    <lineage>
        <taxon>Archaea</taxon>
        <taxon>Methanobacteriati</taxon>
        <taxon>Methanobacteriota</taxon>
        <taxon>Stenosarchaea group</taxon>
        <taxon>Methanomicrobia</taxon>
        <taxon>Methanosarcinales</taxon>
        <taxon>Methanosarcinaceae</taxon>
        <taxon>Methanosarcina</taxon>
    </lineage>
</organism>
<protein>
    <recommendedName>
        <fullName evidence="1">Serine hydroxymethyltransferase</fullName>
        <shortName evidence="1">SHMT</shortName>
        <shortName evidence="1">Serine methylase</shortName>
        <ecNumber evidence="1">2.1.2.1</ecNumber>
    </recommendedName>
</protein>
<accession>Q8PZQ0</accession>
<name>GLYA_METMA</name>
<proteinExistence type="inferred from homology"/>
<evidence type="ECO:0000255" key="1">
    <source>
        <dbReference type="HAMAP-Rule" id="MF_00051"/>
    </source>
</evidence>
<evidence type="ECO:0000305" key="2"/>
<comment type="function">
    <text evidence="1">Catalyzes the reversible interconversion of serine and glycine with tetrahydrofolate (THF) serving as the one-carbon carrier. Also exhibits THF-independent aldolase activity toward beta-hydroxyamino acids, producing glycine and aldehydes, via a retro-aldol mechanism.</text>
</comment>
<comment type="catalytic activity">
    <reaction evidence="1">
        <text>(6R)-5,10-methylene-5,6,7,8-tetrahydrofolate + glycine + H2O = (6S)-5,6,7,8-tetrahydrofolate + L-serine</text>
        <dbReference type="Rhea" id="RHEA:15481"/>
        <dbReference type="ChEBI" id="CHEBI:15377"/>
        <dbReference type="ChEBI" id="CHEBI:15636"/>
        <dbReference type="ChEBI" id="CHEBI:33384"/>
        <dbReference type="ChEBI" id="CHEBI:57305"/>
        <dbReference type="ChEBI" id="CHEBI:57453"/>
        <dbReference type="EC" id="2.1.2.1"/>
    </reaction>
</comment>
<comment type="cofactor">
    <cofactor evidence="1">
        <name>pyridoxal 5'-phosphate</name>
        <dbReference type="ChEBI" id="CHEBI:597326"/>
    </cofactor>
</comment>
<comment type="pathway">
    <text evidence="1">One-carbon metabolism; tetrahydrofolate interconversion.</text>
</comment>
<comment type="pathway">
    <text evidence="1">Amino-acid biosynthesis; glycine biosynthesis; glycine from L-serine: step 1/1.</text>
</comment>
<comment type="subunit">
    <text evidence="1">Homodimer.</text>
</comment>
<comment type="subcellular location">
    <subcellularLocation>
        <location evidence="1">Cytoplasm</location>
    </subcellularLocation>
</comment>
<comment type="similarity">
    <text evidence="1">Belongs to the SHMT family.</text>
</comment>
<comment type="sequence caution" evidence="2">
    <conflict type="erroneous initiation">
        <sequence resource="EMBL-CDS" id="AAM30138"/>
    </conflict>
</comment>